<name>AOC_ORYSI</name>
<keyword id="KW-0927">Auxin signaling pathway</keyword>
<keyword id="KW-0150">Chloroplast</keyword>
<keyword id="KW-0413">Isomerase</keyword>
<keyword id="KW-0444">Lipid biosynthesis</keyword>
<keyword id="KW-0443">Lipid metabolism</keyword>
<keyword id="KW-0611">Plant defense</keyword>
<keyword id="KW-0934">Plastid</keyword>
<keyword id="KW-1185">Reference proteome</keyword>
<keyword id="KW-0809">Transit peptide</keyword>
<reference key="1">
    <citation type="submission" date="2012-08" db="EMBL/GenBank/DDBJ databases">
        <title>Microarray analysis of broad-spectrum resistance derived from an Indica cultivar Rathu Heenati.</title>
        <authorList>
            <person name="Wang Y."/>
        </authorList>
    </citation>
    <scope>NUCLEOTIDE SEQUENCE [MRNA]</scope>
    <source>
        <strain>cv. Rathu Heenati</strain>
    </source>
</reference>
<reference key="2">
    <citation type="journal article" date="2005" name="PLoS Biol.">
        <title>The genomes of Oryza sativa: a history of duplications.</title>
        <authorList>
            <person name="Yu J."/>
            <person name="Wang J."/>
            <person name="Lin W."/>
            <person name="Li S."/>
            <person name="Li H."/>
            <person name="Zhou J."/>
            <person name="Ni P."/>
            <person name="Dong W."/>
            <person name="Hu S."/>
            <person name="Zeng C."/>
            <person name="Zhang J."/>
            <person name="Zhang Y."/>
            <person name="Li R."/>
            <person name="Xu Z."/>
            <person name="Li S."/>
            <person name="Li X."/>
            <person name="Zheng H."/>
            <person name="Cong L."/>
            <person name="Lin L."/>
            <person name="Yin J."/>
            <person name="Geng J."/>
            <person name="Li G."/>
            <person name="Shi J."/>
            <person name="Liu J."/>
            <person name="Lv H."/>
            <person name="Li J."/>
            <person name="Wang J."/>
            <person name="Deng Y."/>
            <person name="Ran L."/>
            <person name="Shi X."/>
            <person name="Wang X."/>
            <person name="Wu Q."/>
            <person name="Li C."/>
            <person name="Ren X."/>
            <person name="Wang J."/>
            <person name="Wang X."/>
            <person name="Li D."/>
            <person name="Liu D."/>
            <person name="Zhang X."/>
            <person name="Ji Z."/>
            <person name="Zhao W."/>
            <person name="Sun Y."/>
            <person name="Zhang Z."/>
            <person name="Bao J."/>
            <person name="Han Y."/>
            <person name="Dong L."/>
            <person name="Ji J."/>
            <person name="Chen P."/>
            <person name="Wu S."/>
            <person name="Liu J."/>
            <person name="Xiao Y."/>
            <person name="Bu D."/>
            <person name="Tan J."/>
            <person name="Yang L."/>
            <person name="Ye C."/>
            <person name="Zhang J."/>
            <person name="Xu J."/>
            <person name="Zhou Y."/>
            <person name="Yu Y."/>
            <person name="Zhang B."/>
            <person name="Zhuang S."/>
            <person name="Wei H."/>
            <person name="Liu B."/>
            <person name="Lei M."/>
            <person name="Yu H."/>
            <person name="Li Y."/>
            <person name="Xu H."/>
            <person name="Wei S."/>
            <person name="He X."/>
            <person name="Fang L."/>
            <person name="Zhang Z."/>
            <person name="Zhang Y."/>
            <person name="Huang X."/>
            <person name="Su Z."/>
            <person name="Tong W."/>
            <person name="Li J."/>
            <person name="Tong Z."/>
            <person name="Li S."/>
            <person name="Ye J."/>
            <person name="Wang L."/>
            <person name="Fang L."/>
            <person name="Lei T."/>
            <person name="Chen C.-S."/>
            <person name="Chen H.-C."/>
            <person name="Xu Z."/>
            <person name="Li H."/>
            <person name="Huang H."/>
            <person name="Zhang F."/>
            <person name="Xu H."/>
            <person name="Li N."/>
            <person name="Zhao C."/>
            <person name="Li S."/>
            <person name="Dong L."/>
            <person name="Huang Y."/>
            <person name="Li L."/>
            <person name="Xi Y."/>
            <person name="Qi Q."/>
            <person name="Li W."/>
            <person name="Zhang B."/>
            <person name="Hu W."/>
            <person name="Zhang Y."/>
            <person name="Tian X."/>
            <person name="Jiao Y."/>
            <person name="Liang X."/>
            <person name="Jin J."/>
            <person name="Gao L."/>
            <person name="Zheng W."/>
            <person name="Hao B."/>
            <person name="Liu S.-M."/>
            <person name="Wang W."/>
            <person name="Yuan L."/>
            <person name="Cao M."/>
            <person name="McDermott J."/>
            <person name="Samudrala R."/>
            <person name="Wang J."/>
            <person name="Wong G.K.-S."/>
            <person name="Yang H."/>
        </authorList>
    </citation>
    <scope>NUCLEOTIDE SEQUENCE [LARGE SCALE GENOMIC DNA]</scope>
    <source>
        <strain>cv. 93-11</strain>
    </source>
</reference>
<comment type="function">
    <text evidence="1">Involved in the production of 12-oxo-phytodienoic acid (OPDA), a precursor of jasmonic acid (JA). Required for the production of JA in response to wounding. Necessary for flower and coleoptile development regulation by light, including blue (BL), red (RL) and far red (FR) lights. Involved in the auxin-mediated signaling pathway leading to growth stimulation. Essential for photodestruction of phyA upon activation by RL and FR. Implicated in responses to salt stress (NaCl).</text>
</comment>
<comment type="function">
    <text evidence="1">Confers resistance to incompatible strains of the blast fungus Magnaporthe grisea, jasmonic acid (JA) thus playing a significant role in the resistance to fungal infection. Implicated in riboflavin-induced resistance to the sheath blight Rhizoctonia solani. Required for Pseudomonas fluorescens-mediated JA-dependent induced systemic resistance (ISR). Confers some resistance, independently of the JA pathway but probably via OPDA accumulation, to brown planthopper (BPH, Nilaparvata lugens), a destructive, monophagous, piercing-sucking insect, mainly by reducing its feeding activity and survival rate. Triggers resistance to the chewing insect striped stem borer (SSB) Chilo suppressalis, to the root hemiparasite witchweed Striga hermonthica, and to the root feeder insect rice water weevil Lissorhoptrus oryzophilus, in a JA-dependent manner, by attenuating both the growth mass and growth rate of caterpillars.</text>
</comment>
<comment type="catalytic activity">
    <reaction evidence="1">
        <text>(9Z,13S,15Z)-12,13-epoxyoctadeca-9,11,15-trienoate = (9S,13S,15Z)-12-oxophyto-10,15-dienoate</text>
        <dbReference type="Rhea" id="RHEA:22592"/>
        <dbReference type="ChEBI" id="CHEBI:36438"/>
        <dbReference type="ChEBI" id="CHEBI:57411"/>
        <dbReference type="EC" id="5.3.99.6"/>
    </reaction>
</comment>
<comment type="pathway">
    <text evidence="5">Lipid metabolism; polyunsaturated fatty acid biosynthesis.</text>
</comment>
<comment type="subcellular location">
    <subcellularLocation>
        <location evidence="2">Plastid</location>
        <location evidence="2">Chloroplast</location>
    </subcellularLocation>
</comment>
<comment type="similarity">
    <text evidence="5">Belongs to the allene oxide cyclase family.</text>
</comment>
<gene>
    <name evidence="5" type="primary">AOC</name>
    <name evidence="4" type="synonym">AOC4</name>
    <name evidence="6" type="ORF">OsI_12194</name>
</gene>
<organism>
    <name type="scientific">Oryza sativa subsp. indica</name>
    <name type="common">Rice</name>
    <dbReference type="NCBI Taxonomy" id="39946"/>
    <lineage>
        <taxon>Eukaryota</taxon>
        <taxon>Viridiplantae</taxon>
        <taxon>Streptophyta</taxon>
        <taxon>Embryophyta</taxon>
        <taxon>Tracheophyta</taxon>
        <taxon>Spermatophyta</taxon>
        <taxon>Magnoliopsida</taxon>
        <taxon>Liliopsida</taxon>
        <taxon>Poales</taxon>
        <taxon>Poaceae</taxon>
        <taxon>BOP clade</taxon>
        <taxon>Oryzoideae</taxon>
        <taxon>Oryzeae</taxon>
        <taxon>Oryzinae</taxon>
        <taxon>Oryza</taxon>
        <taxon>Oryza sativa</taxon>
    </lineage>
</organism>
<feature type="transit peptide" description="Chloroplast" evidence="3">
    <location>
        <begin position="1"/>
        <end position="49"/>
    </location>
</feature>
<feature type="chain" id="PRO_0000437267" description="Allene oxide cyclase, chloroplastic">
    <location>
        <begin position="50"/>
        <end position="240"/>
    </location>
</feature>
<feature type="sequence conflict" description="In Ref. 1; AFP87550." evidence="5" ref="1">
    <original>F</original>
    <variation>S</variation>
    <location>
        <position position="22"/>
    </location>
</feature>
<evidence type="ECO:0000250" key="1">
    <source>
        <dbReference type="UniProtKB" id="Q75KD7"/>
    </source>
</evidence>
<evidence type="ECO:0000250" key="2">
    <source>
        <dbReference type="UniProtKB" id="Q9LS01"/>
    </source>
</evidence>
<evidence type="ECO:0000255" key="3"/>
<evidence type="ECO:0000303" key="4">
    <source ref="1"/>
</evidence>
<evidence type="ECO:0000305" key="5"/>
<evidence type="ECO:0000312" key="6">
    <source>
        <dbReference type="EMBL" id="EAY90593.1"/>
    </source>
</evidence>
<protein>
    <recommendedName>
        <fullName evidence="4">Allene oxide cyclase, chloroplastic</fullName>
        <shortName evidence="5">OsAOC</shortName>
        <ecNumber evidence="1">5.3.99.6</ecNumber>
    </recommendedName>
</protein>
<sequence length="240" mass="26051">MAAAAPSRVSVRAAAPGQTGGFAKIRPQVVVAAAARSAGVSGRRARSVRASLFSPKPATPKDARPAKVQEMFVYEINERDRESPAYLRLSAKQTENALGDLVPFTNKLYSGSLDKRLGISAGICILIQHVPERNGDRYEAIYSFYFGDYGHISVQGPYLTYEESYLAVTGGSGVFEGAYGQVKLNQIVFPFKIFYTFYLKGIPDLPRELLCTPVPPSPTVEPTPAAKATEPHACLNNFTN</sequence>
<dbReference type="EC" id="5.3.99.6" evidence="1"/>
<dbReference type="EMBL" id="JX467697">
    <property type="protein sequence ID" value="AFP87550.1"/>
    <property type="molecule type" value="mRNA"/>
</dbReference>
<dbReference type="EMBL" id="CM000128">
    <property type="protein sequence ID" value="EAY90593.1"/>
    <property type="molecule type" value="Genomic_DNA"/>
</dbReference>
<dbReference type="SMR" id="A2XID3"/>
<dbReference type="STRING" id="39946.A2XID3"/>
<dbReference type="EnsemblPlants" id="BGIOSGA010465-TA">
    <property type="protein sequence ID" value="BGIOSGA010465-PA"/>
    <property type="gene ID" value="BGIOSGA010465"/>
</dbReference>
<dbReference type="EnsemblPlants" id="OsGoSa_03g0022770.01">
    <property type="protein sequence ID" value="OsGoSa_03g0022770.01"/>
    <property type="gene ID" value="OsGoSa_03g0022770"/>
</dbReference>
<dbReference type="EnsemblPlants" id="OsIR64_03g0022360.01">
    <property type="protein sequence ID" value="OsIR64_03g0022360.01"/>
    <property type="gene ID" value="OsIR64_03g0022360"/>
</dbReference>
<dbReference type="EnsemblPlants" id="OsLaMu_03g0022440.01">
    <property type="protein sequence ID" value="OsLaMu_03g0022440.01"/>
    <property type="gene ID" value="OsLaMu_03g0022440"/>
</dbReference>
<dbReference type="EnsemblPlants" id="OsLima_03g0022660.01">
    <property type="protein sequence ID" value="OsLima_03g0022660.01"/>
    <property type="gene ID" value="OsLima_03g0022660"/>
</dbReference>
<dbReference type="EnsemblPlants" id="OsLiXu_03g0022590.01">
    <property type="protein sequence ID" value="OsLiXu_03g0022590.01"/>
    <property type="gene ID" value="OsLiXu_03g0022590"/>
</dbReference>
<dbReference type="EnsemblPlants" id="OsPr106_03g0022610.01">
    <property type="protein sequence ID" value="OsPr106_03g0022610.01"/>
    <property type="gene ID" value="OsPr106_03g0022610"/>
</dbReference>
<dbReference type="EnsemblPlants" id="OsZS97_03G022590_01">
    <property type="protein sequence ID" value="OsZS97_03G022590_01"/>
    <property type="gene ID" value="OsZS97_03G022590"/>
</dbReference>
<dbReference type="Gramene" id="BGIOSGA010465-TA">
    <property type="protein sequence ID" value="BGIOSGA010465-PA"/>
    <property type="gene ID" value="BGIOSGA010465"/>
</dbReference>
<dbReference type="Gramene" id="OsGoSa_03g0022770.01">
    <property type="protein sequence ID" value="OsGoSa_03g0022770.01"/>
    <property type="gene ID" value="OsGoSa_03g0022770"/>
</dbReference>
<dbReference type="Gramene" id="OsIR64_03g0022360.01">
    <property type="protein sequence ID" value="OsIR64_03g0022360.01"/>
    <property type="gene ID" value="OsIR64_03g0022360"/>
</dbReference>
<dbReference type="Gramene" id="OsLaMu_03g0022440.01">
    <property type="protein sequence ID" value="OsLaMu_03g0022440.01"/>
    <property type="gene ID" value="OsLaMu_03g0022440"/>
</dbReference>
<dbReference type="Gramene" id="OsLima_03g0022660.01">
    <property type="protein sequence ID" value="OsLima_03g0022660.01"/>
    <property type="gene ID" value="OsLima_03g0022660"/>
</dbReference>
<dbReference type="Gramene" id="OsLiXu_03g0022590.01">
    <property type="protein sequence ID" value="OsLiXu_03g0022590.01"/>
    <property type="gene ID" value="OsLiXu_03g0022590"/>
</dbReference>
<dbReference type="Gramene" id="OsPr106_03g0022610.01">
    <property type="protein sequence ID" value="OsPr106_03g0022610.01"/>
    <property type="gene ID" value="OsPr106_03g0022610"/>
</dbReference>
<dbReference type="Gramene" id="OsZS97_03G022590_01">
    <property type="protein sequence ID" value="OsZS97_03G022590_01"/>
    <property type="gene ID" value="OsZS97_03G022590"/>
</dbReference>
<dbReference type="HOGENOM" id="CLU_069000_0_0_1"/>
<dbReference type="OMA" id="KEPHACV"/>
<dbReference type="OrthoDB" id="1894474at2759"/>
<dbReference type="UniPathway" id="UPA00658"/>
<dbReference type="Proteomes" id="UP000007015">
    <property type="component" value="Chromosome 3"/>
</dbReference>
<dbReference type="GO" id="GO:0009507">
    <property type="term" value="C:chloroplast"/>
    <property type="evidence" value="ECO:0007669"/>
    <property type="project" value="UniProtKB-SubCell"/>
</dbReference>
<dbReference type="GO" id="GO:0046423">
    <property type="term" value="F:allene-oxide cyclase activity"/>
    <property type="evidence" value="ECO:0007669"/>
    <property type="project" value="UniProtKB-EC"/>
</dbReference>
<dbReference type="GO" id="GO:0009734">
    <property type="term" value="P:auxin-activated signaling pathway"/>
    <property type="evidence" value="ECO:0007669"/>
    <property type="project" value="UniProtKB-KW"/>
</dbReference>
<dbReference type="GO" id="GO:0007623">
    <property type="term" value="P:circadian rhythm"/>
    <property type="evidence" value="ECO:0007669"/>
    <property type="project" value="EnsemblPlants"/>
</dbReference>
<dbReference type="GO" id="GO:0050832">
    <property type="term" value="P:defense response to fungus"/>
    <property type="evidence" value="ECO:0007669"/>
    <property type="project" value="EnsemblPlants"/>
</dbReference>
<dbReference type="GO" id="GO:0080186">
    <property type="term" value="P:developmental vegetative growth"/>
    <property type="evidence" value="ECO:0007669"/>
    <property type="project" value="EnsemblPlants"/>
</dbReference>
<dbReference type="GO" id="GO:0009908">
    <property type="term" value="P:flower development"/>
    <property type="evidence" value="ECO:0007669"/>
    <property type="project" value="EnsemblPlants"/>
</dbReference>
<dbReference type="GO" id="GO:0009864">
    <property type="term" value="P:induced systemic resistance, jasmonic acid mediated signaling pathway"/>
    <property type="evidence" value="ECO:0007669"/>
    <property type="project" value="EnsemblPlants"/>
</dbReference>
<dbReference type="GO" id="GO:0009695">
    <property type="term" value="P:jasmonic acid biosynthetic process"/>
    <property type="evidence" value="ECO:0007669"/>
    <property type="project" value="EnsemblPlants"/>
</dbReference>
<dbReference type="GO" id="GO:0048573">
    <property type="term" value="P:photoperiodism, flowering"/>
    <property type="evidence" value="ECO:0007669"/>
    <property type="project" value="EnsemblPlants"/>
</dbReference>
<dbReference type="GO" id="GO:1900367">
    <property type="term" value="P:positive regulation of defense response to insect"/>
    <property type="evidence" value="ECO:0007669"/>
    <property type="project" value="EnsemblPlants"/>
</dbReference>
<dbReference type="GO" id="GO:0009737">
    <property type="term" value="P:response to abscisic acid"/>
    <property type="evidence" value="ECO:0007669"/>
    <property type="project" value="EnsemblPlants"/>
</dbReference>
<dbReference type="GO" id="GO:0009646">
    <property type="term" value="P:response to absence of light"/>
    <property type="evidence" value="ECO:0007669"/>
    <property type="project" value="EnsemblPlants"/>
</dbReference>
<dbReference type="GO" id="GO:0009637">
    <property type="term" value="P:response to blue light"/>
    <property type="evidence" value="ECO:0007669"/>
    <property type="project" value="EnsemblPlants"/>
</dbReference>
<dbReference type="GO" id="GO:0009723">
    <property type="term" value="P:response to ethylene"/>
    <property type="evidence" value="ECO:0007669"/>
    <property type="project" value="EnsemblPlants"/>
</dbReference>
<dbReference type="GO" id="GO:0010218">
    <property type="term" value="P:response to far red light"/>
    <property type="evidence" value="ECO:0007669"/>
    <property type="project" value="EnsemblPlants"/>
</dbReference>
<dbReference type="GO" id="GO:0042542">
    <property type="term" value="P:response to hydrogen peroxide"/>
    <property type="evidence" value="ECO:0007669"/>
    <property type="project" value="EnsemblPlants"/>
</dbReference>
<dbReference type="GO" id="GO:0009625">
    <property type="term" value="P:response to insect"/>
    <property type="evidence" value="ECO:0007669"/>
    <property type="project" value="EnsemblPlants"/>
</dbReference>
<dbReference type="GO" id="GO:0010038">
    <property type="term" value="P:response to metal ion"/>
    <property type="evidence" value="ECO:0007669"/>
    <property type="project" value="EnsemblPlants"/>
</dbReference>
<dbReference type="GO" id="GO:0010114">
    <property type="term" value="P:response to red light"/>
    <property type="evidence" value="ECO:0007669"/>
    <property type="project" value="EnsemblPlants"/>
</dbReference>
<dbReference type="GO" id="GO:0009751">
    <property type="term" value="P:response to salicylic acid"/>
    <property type="evidence" value="ECO:0007669"/>
    <property type="project" value="EnsemblPlants"/>
</dbReference>
<dbReference type="GO" id="GO:0009651">
    <property type="term" value="P:response to salt stress"/>
    <property type="evidence" value="ECO:0007669"/>
    <property type="project" value="EnsemblPlants"/>
</dbReference>
<dbReference type="GO" id="GO:0033274">
    <property type="term" value="P:response to vitamin B2"/>
    <property type="evidence" value="ECO:0007669"/>
    <property type="project" value="EnsemblPlants"/>
</dbReference>
<dbReference type="GO" id="GO:0009611">
    <property type="term" value="P:response to wounding"/>
    <property type="evidence" value="ECO:0007669"/>
    <property type="project" value="EnsemblPlants"/>
</dbReference>
<dbReference type="GO" id="GO:0006636">
    <property type="term" value="P:unsaturated fatty acid biosynthetic process"/>
    <property type="evidence" value="ECO:0007669"/>
    <property type="project" value="UniProtKB-UniPathway"/>
</dbReference>
<dbReference type="FunFam" id="2.40.480.10:FF:000001">
    <property type="entry name" value="Allene oxide cyclase, chloroplastic"/>
    <property type="match status" value="1"/>
</dbReference>
<dbReference type="Gene3D" id="2.40.480.10">
    <property type="entry name" value="Allene oxide cyclase-like"/>
    <property type="match status" value="1"/>
</dbReference>
<dbReference type="InterPro" id="IPR009410">
    <property type="entry name" value="Allene_ox_cyc"/>
</dbReference>
<dbReference type="InterPro" id="IPR044859">
    <property type="entry name" value="Allene_oxi_cyc_Dirigent"/>
</dbReference>
<dbReference type="InterPro" id="IPR034871">
    <property type="entry name" value="Allene_oxi_cyc_sf"/>
</dbReference>
<dbReference type="PANTHER" id="PTHR31843">
    <property type="entry name" value="ALLENE OXIDE CYCLASE 4, CHLOROPLASTIC"/>
    <property type="match status" value="1"/>
</dbReference>
<dbReference type="PANTHER" id="PTHR31843:SF11">
    <property type="entry name" value="ALLENE OXIDE CYCLASE 4, CHLOROPLASTIC"/>
    <property type="match status" value="1"/>
</dbReference>
<dbReference type="Pfam" id="PF06351">
    <property type="entry name" value="Allene_ox_cyc"/>
    <property type="match status" value="1"/>
</dbReference>
<dbReference type="SUPFAM" id="SSF141493">
    <property type="entry name" value="Allene oxide cyclase-like"/>
    <property type="match status" value="1"/>
</dbReference>
<proteinExistence type="evidence at transcript level"/>
<accession>A2XID3</accession>
<accession>J7H3S8</accession>